<keyword id="KW-0025">Alternative splicing</keyword>
<keyword id="KW-0130">Cell adhesion</keyword>
<keyword id="KW-1003">Cell membrane</keyword>
<keyword id="KW-0966">Cell projection</keyword>
<keyword id="KW-1015">Disulfide bond</keyword>
<keyword id="KW-0325">Glycoprotein</keyword>
<keyword id="KW-0393">Immunoglobulin domain</keyword>
<keyword id="KW-0472">Membrane</keyword>
<keyword id="KW-0597">Phosphoprotein</keyword>
<keyword id="KW-1267">Proteomics identification</keyword>
<keyword id="KW-1185">Reference proteome</keyword>
<keyword id="KW-0677">Repeat</keyword>
<keyword id="KW-0732">Signal</keyword>
<keyword id="KW-0770">Synapse</keyword>
<keyword id="KW-0812">Transmembrane</keyword>
<keyword id="KW-1133">Transmembrane helix</keyword>
<dbReference type="EMBL" id="AB646740">
    <property type="protein sequence ID" value="BAK93303.1"/>
    <property type="molecule type" value="mRNA"/>
</dbReference>
<dbReference type="EMBL" id="AB646741">
    <property type="protein sequence ID" value="BAK93304.1"/>
    <property type="molecule type" value="mRNA"/>
</dbReference>
<dbReference type="EMBL" id="AB646742">
    <property type="protein sequence ID" value="BAK93305.1"/>
    <property type="molecule type" value="mRNA"/>
</dbReference>
<dbReference type="EMBL" id="AB646743">
    <property type="protein sequence ID" value="BAK93306.1"/>
    <property type="molecule type" value="mRNA"/>
</dbReference>
<dbReference type="EMBL" id="AF538973">
    <property type="protein sequence ID" value="AAN16368.1"/>
    <property type="molecule type" value="mRNA"/>
</dbReference>
<dbReference type="EMBL" id="AL833049">
    <property type="protein sequence ID" value="CAH56314.1"/>
    <property type="molecule type" value="mRNA"/>
</dbReference>
<dbReference type="EMBL" id="AL834270">
    <property type="protein sequence ID" value="CAD38945.1"/>
    <property type="molecule type" value="mRNA"/>
</dbReference>
<dbReference type="EMBL" id="BC105999">
    <property type="protein sequence ID" value="AAI06000.1"/>
    <property type="molecule type" value="mRNA"/>
</dbReference>
<dbReference type="CCDS" id="CCDS33792.1">
    <molecule id="Q8N3J6-3"/>
</dbReference>
<dbReference type="CCDS" id="CCDS54613.1">
    <molecule id="Q8N3J6-2"/>
</dbReference>
<dbReference type="CCDS" id="CCDS54614.1">
    <molecule id="Q8N3J6-1"/>
</dbReference>
<dbReference type="RefSeq" id="NP_001161146.1">
    <molecule id="Q8N3J6-1"/>
    <property type="nucleotide sequence ID" value="NM_001167674.2"/>
</dbReference>
<dbReference type="RefSeq" id="NP_001161147.1">
    <molecule id="Q8N3J6-2"/>
    <property type="nucleotide sequence ID" value="NM_001167675.2"/>
</dbReference>
<dbReference type="RefSeq" id="NP_001243431.1">
    <molecule id="Q8N3J6-5"/>
    <property type="nucleotide sequence ID" value="NM_001256502.2"/>
</dbReference>
<dbReference type="RefSeq" id="NP_001243432.1">
    <molecule id="Q8N3J6-5"/>
    <property type="nucleotide sequence ID" value="NM_001256503.2"/>
</dbReference>
<dbReference type="RefSeq" id="NP_001243433.1">
    <molecule id="Q8N3J6-4"/>
    <property type="nucleotide sequence ID" value="NM_001256504.2"/>
</dbReference>
<dbReference type="RefSeq" id="NP_001243434.1">
    <molecule id="Q8N3J6-4"/>
    <property type="nucleotide sequence ID" value="NM_001256505.2"/>
</dbReference>
<dbReference type="RefSeq" id="NP_001368893.1">
    <molecule id="Q8N3J6-1"/>
    <property type="nucleotide sequence ID" value="NM_001381964.1"/>
</dbReference>
<dbReference type="RefSeq" id="NP_694854.2">
    <molecule id="Q8N3J6-3"/>
    <property type="nucleotide sequence ID" value="NM_153184.4"/>
</dbReference>
<dbReference type="RefSeq" id="XP_006713144.1">
    <property type="nucleotide sequence ID" value="XM_006713081.3"/>
</dbReference>
<dbReference type="SMR" id="Q8N3J6"/>
<dbReference type="BioGRID" id="128973">
    <property type="interactions" value="5"/>
</dbReference>
<dbReference type="FunCoup" id="Q8N3J6">
    <property type="interactions" value="770"/>
</dbReference>
<dbReference type="IntAct" id="Q8N3J6">
    <property type="interactions" value="3"/>
</dbReference>
<dbReference type="MINT" id="Q8N3J6"/>
<dbReference type="STRING" id="9606.ENSP00000384193"/>
<dbReference type="GlyCosmos" id="Q8N3J6">
    <property type="glycosylation" value="3 sites, No reported glycans"/>
</dbReference>
<dbReference type="GlyGen" id="Q8N3J6">
    <property type="glycosylation" value="4 sites, 1 N-linked glycan (1 site)"/>
</dbReference>
<dbReference type="iPTMnet" id="Q8N3J6"/>
<dbReference type="PhosphoSitePlus" id="Q8N3J6"/>
<dbReference type="SwissPalm" id="Q8N3J6"/>
<dbReference type="BioMuta" id="CADM2"/>
<dbReference type="DMDM" id="74759850"/>
<dbReference type="jPOST" id="Q8N3J6"/>
<dbReference type="MassIVE" id="Q8N3J6"/>
<dbReference type="PaxDb" id="9606-ENSP00000384193"/>
<dbReference type="PeptideAtlas" id="Q8N3J6"/>
<dbReference type="ProteomicsDB" id="71814">
    <molecule id="Q8N3J6-1"/>
</dbReference>
<dbReference type="ProteomicsDB" id="71815">
    <molecule id="Q8N3J6-2"/>
</dbReference>
<dbReference type="ProteomicsDB" id="71816">
    <molecule id="Q8N3J6-3"/>
</dbReference>
<dbReference type="TopDownProteomics" id="Q8N3J6-3">
    <molecule id="Q8N3J6-3"/>
</dbReference>
<dbReference type="Antibodypedia" id="2209">
    <property type="antibodies" value="206 antibodies from 26 providers"/>
</dbReference>
<dbReference type="DNASU" id="253559"/>
<dbReference type="Ensembl" id="ENST00000383699.8">
    <molecule id="Q8N3J6-2"/>
    <property type="protein sequence ID" value="ENSP00000373200.3"/>
    <property type="gene ID" value="ENSG00000175161.14"/>
</dbReference>
<dbReference type="Ensembl" id="ENST00000405615.2">
    <molecule id="Q8N3J6-3"/>
    <property type="protein sequence ID" value="ENSP00000384193.2"/>
    <property type="gene ID" value="ENSG00000175161.14"/>
</dbReference>
<dbReference type="Ensembl" id="ENST00000407528.6">
    <molecule id="Q8N3J6-1"/>
    <property type="protein sequence ID" value="ENSP00000384575.2"/>
    <property type="gene ID" value="ENSG00000175161.14"/>
</dbReference>
<dbReference type="GeneID" id="253559"/>
<dbReference type="KEGG" id="hsa:253559"/>
<dbReference type="MANE-Select" id="ENST00000383699.8">
    <molecule id="Q8N3J6-2"/>
    <property type="protein sequence ID" value="ENSP00000373200.3"/>
    <property type="RefSeq nucleotide sequence ID" value="NM_001167675.2"/>
    <property type="RefSeq protein sequence ID" value="NP_001161147.1"/>
</dbReference>
<dbReference type="UCSC" id="uc003dqj.4">
    <molecule id="Q8N3J6-1"/>
    <property type="organism name" value="human"/>
</dbReference>
<dbReference type="AGR" id="HGNC:29849"/>
<dbReference type="CTD" id="253559"/>
<dbReference type="DisGeNET" id="253559"/>
<dbReference type="GeneCards" id="CADM2"/>
<dbReference type="HGNC" id="HGNC:29849">
    <property type="gene designation" value="CADM2"/>
</dbReference>
<dbReference type="HPA" id="ENSG00000175161">
    <property type="expression patterns" value="Group enriched (brain, retina)"/>
</dbReference>
<dbReference type="MIM" id="609938">
    <property type="type" value="gene"/>
</dbReference>
<dbReference type="neXtProt" id="NX_Q8N3J6"/>
<dbReference type="OpenTargets" id="ENSG00000175161"/>
<dbReference type="PharmGKB" id="PA162380882"/>
<dbReference type="VEuPathDB" id="HostDB:ENSG00000175161"/>
<dbReference type="eggNOG" id="ENOG502QV9X">
    <property type="taxonomic scope" value="Eukaryota"/>
</dbReference>
<dbReference type="GeneTree" id="ENSGT00940000155947"/>
<dbReference type="HOGENOM" id="CLU_047574_2_1_1"/>
<dbReference type="InParanoid" id="Q8N3J6"/>
<dbReference type="OMA" id="CEVFHET"/>
<dbReference type="OrthoDB" id="10028801at2759"/>
<dbReference type="PAN-GO" id="Q8N3J6">
    <property type="GO annotations" value="3 GO annotations based on evolutionary models"/>
</dbReference>
<dbReference type="PhylomeDB" id="Q8N3J6"/>
<dbReference type="TreeFam" id="TF326804"/>
<dbReference type="PathwayCommons" id="Q8N3J6"/>
<dbReference type="Reactome" id="R-HSA-418990">
    <property type="pathway name" value="Adherens junctions interactions"/>
</dbReference>
<dbReference type="SignaLink" id="Q8N3J6"/>
<dbReference type="SIGNOR" id="Q8N3J6"/>
<dbReference type="BioGRID-ORCS" id="253559">
    <property type="hits" value="20 hits in 1151 CRISPR screens"/>
</dbReference>
<dbReference type="ChiTaRS" id="CADM2">
    <property type="organism name" value="human"/>
</dbReference>
<dbReference type="GenomeRNAi" id="253559"/>
<dbReference type="Pharos" id="Q8N3J6">
    <property type="development level" value="Tbio"/>
</dbReference>
<dbReference type="PRO" id="PR:Q8N3J6"/>
<dbReference type="Proteomes" id="UP000005640">
    <property type="component" value="Chromosome 3"/>
</dbReference>
<dbReference type="RNAct" id="Q8N3J6">
    <property type="molecule type" value="protein"/>
</dbReference>
<dbReference type="Bgee" id="ENSG00000175161">
    <property type="expression patterns" value="Expressed in endothelial cell and 138 other cell types or tissues"/>
</dbReference>
<dbReference type="ExpressionAtlas" id="Q8N3J6">
    <property type="expression patterns" value="baseline and differential"/>
</dbReference>
<dbReference type="GO" id="GO:0030424">
    <property type="term" value="C:axon"/>
    <property type="evidence" value="ECO:0007669"/>
    <property type="project" value="UniProtKB-SubCell"/>
</dbReference>
<dbReference type="GO" id="GO:0032809">
    <property type="term" value="C:neuronal cell body membrane"/>
    <property type="evidence" value="ECO:0000318"/>
    <property type="project" value="GO_Central"/>
</dbReference>
<dbReference type="GO" id="GO:0005886">
    <property type="term" value="C:plasma membrane"/>
    <property type="evidence" value="ECO:0000304"/>
    <property type="project" value="Reactome"/>
</dbReference>
<dbReference type="GO" id="GO:0045202">
    <property type="term" value="C:synapse"/>
    <property type="evidence" value="ECO:0007669"/>
    <property type="project" value="UniProtKB-SubCell"/>
</dbReference>
<dbReference type="GO" id="GO:0007156">
    <property type="term" value="P:homophilic cell adhesion via plasma membrane adhesion molecules"/>
    <property type="evidence" value="ECO:0000318"/>
    <property type="project" value="GO_Central"/>
</dbReference>
<dbReference type="CDD" id="cd05884">
    <property type="entry name" value="IgI_2_Necl-3"/>
    <property type="match status" value="1"/>
</dbReference>
<dbReference type="CDD" id="cd07701">
    <property type="entry name" value="IgV_1_Necl-3"/>
    <property type="match status" value="1"/>
</dbReference>
<dbReference type="FunFam" id="2.60.40.10:FF:000013">
    <property type="entry name" value="cell adhesion molecule 1 isoform X1"/>
    <property type="match status" value="1"/>
</dbReference>
<dbReference type="FunFam" id="2.60.40.10:FF:000446">
    <property type="entry name" value="cell adhesion molecule 2 isoform X1"/>
    <property type="match status" value="1"/>
</dbReference>
<dbReference type="FunFam" id="2.60.40.10:FF:000449">
    <property type="entry name" value="cell adhesion molecule 2 isoform X1"/>
    <property type="match status" value="1"/>
</dbReference>
<dbReference type="Gene3D" id="2.60.40.10">
    <property type="entry name" value="Immunoglobulins"/>
    <property type="match status" value="3"/>
</dbReference>
<dbReference type="InterPro" id="IPR013162">
    <property type="entry name" value="CD80_C2-set"/>
</dbReference>
<dbReference type="InterPro" id="IPR007110">
    <property type="entry name" value="Ig-like_dom"/>
</dbReference>
<dbReference type="InterPro" id="IPR036179">
    <property type="entry name" value="Ig-like_dom_sf"/>
</dbReference>
<dbReference type="InterPro" id="IPR013783">
    <property type="entry name" value="Ig-like_fold"/>
</dbReference>
<dbReference type="InterPro" id="IPR003599">
    <property type="entry name" value="Ig_sub"/>
</dbReference>
<dbReference type="InterPro" id="IPR003598">
    <property type="entry name" value="Ig_sub2"/>
</dbReference>
<dbReference type="InterPro" id="IPR013106">
    <property type="entry name" value="Ig_V-set"/>
</dbReference>
<dbReference type="InterPro" id="IPR003585">
    <property type="entry name" value="Neurexin-like"/>
</dbReference>
<dbReference type="PANTHER" id="PTHR45889:SF1">
    <property type="entry name" value="CELL ADHESION MOLECULE 2"/>
    <property type="match status" value="1"/>
</dbReference>
<dbReference type="PANTHER" id="PTHR45889">
    <property type="entry name" value="IG-LIKE DOMAIN-CONTAINING PROTEIN"/>
    <property type="match status" value="1"/>
</dbReference>
<dbReference type="Pfam" id="PF08205">
    <property type="entry name" value="C2-set_2"/>
    <property type="match status" value="1"/>
</dbReference>
<dbReference type="Pfam" id="PF13927">
    <property type="entry name" value="Ig_3"/>
    <property type="match status" value="1"/>
</dbReference>
<dbReference type="Pfam" id="PF07686">
    <property type="entry name" value="V-set"/>
    <property type="match status" value="1"/>
</dbReference>
<dbReference type="SMART" id="SM00294">
    <property type="entry name" value="4.1m"/>
    <property type="match status" value="1"/>
</dbReference>
<dbReference type="SMART" id="SM00409">
    <property type="entry name" value="IG"/>
    <property type="match status" value="2"/>
</dbReference>
<dbReference type="SMART" id="SM00408">
    <property type="entry name" value="IGc2"/>
    <property type="match status" value="2"/>
</dbReference>
<dbReference type="SUPFAM" id="SSF48726">
    <property type="entry name" value="Immunoglobulin"/>
    <property type="match status" value="3"/>
</dbReference>
<dbReference type="PROSITE" id="PS50835">
    <property type="entry name" value="IG_LIKE"/>
    <property type="match status" value="3"/>
</dbReference>
<sequence length="435" mass="47554">MIWKRSAVLRFYSVCGLLLQGSQGQFPLTQNVTVVEGGTAILTCRVDQNDNTSLQWSNPAQQTLYFDDKKALRDNRIELVRASWHELSISVSDVSLSDEGQYTCSLFTMPVKTSKAYLTVLGVPEKPQISGFSSPVMEGDLMQLTCKTSGSKPAADIRWFKNDKEIKDVKYLKEEDANRKTFTVSSTLDFRVDRSDDGVAVICRVDHESLNATPQVAMQVLEIHYTPSVKIIPSTPFPQEGQPLILTCESKGKPLPEPVLWTKDGGELPDPDRMVVSGRELNILFLNKTDNGTYRCEATNTIGQSSAEYVLIVHDVPNTLLPTTIIPSLTTATVTTTVAITTSPTTSATTSSIRDPNALAGQNGPDHALIGGIVAVVVFVTLCSIFLLGRYLARHKGTYLTNEAKGAEDAPDADTAIINAEGSQVNAEEKKEYFI</sequence>
<accession>Q8N3J6</accession>
<accession>G3XHN7</accession>
<accession>G3XHN8</accession>
<accession>Q3KQY9</accession>
<accession>Q658Q7</accession>
<accession>Q8IZP8</accession>
<evidence type="ECO:0000250" key="1">
    <source>
        <dbReference type="UniProtKB" id="Q1WIM2"/>
    </source>
</evidence>
<evidence type="ECO:0000255" key="2"/>
<evidence type="ECO:0000255" key="3">
    <source>
        <dbReference type="PROSITE-ProRule" id="PRU00114"/>
    </source>
</evidence>
<evidence type="ECO:0000269" key="4">
    <source>
    </source>
</evidence>
<evidence type="ECO:0000269" key="5">
    <source>
    </source>
</evidence>
<evidence type="ECO:0000303" key="6">
    <source>
    </source>
</evidence>
<evidence type="ECO:0000303" key="7">
    <source>
    </source>
</evidence>
<evidence type="ECO:0000303" key="8">
    <source>
    </source>
</evidence>
<evidence type="ECO:0000303" key="9">
    <source ref="2"/>
</evidence>
<evidence type="ECO:0000305" key="10"/>
<protein>
    <recommendedName>
        <fullName>Cell adhesion molecule 2</fullName>
    </recommendedName>
    <alternativeName>
        <fullName>Immunoglobulin superfamily member 4D</fullName>
        <shortName>IgSF4D</shortName>
    </alternativeName>
    <alternativeName>
        <fullName>Nectin-like protein 3</fullName>
        <shortName>NECL-3</shortName>
    </alternativeName>
    <alternativeName>
        <fullName>Synaptic cell adhesion molecule 2</fullName>
        <shortName>SynCAM 2</shortName>
    </alternativeName>
</protein>
<organism>
    <name type="scientific">Homo sapiens</name>
    <name type="common">Human</name>
    <dbReference type="NCBI Taxonomy" id="9606"/>
    <lineage>
        <taxon>Eukaryota</taxon>
        <taxon>Metazoa</taxon>
        <taxon>Chordata</taxon>
        <taxon>Craniata</taxon>
        <taxon>Vertebrata</taxon>
        <taxon>Euteleostomi</taxon>
        <taxon>Mammalia</taxon>
        <taxon>Eutheria</taxon>
        <taxon>Euarchontoglires</taxon>
        <taxon>Primates</taxon>
        <taxon>Haplorrhini</taxon>
        <taxon>Catarrhini</taxon>
        <taxon>Hominidae</taxon>
        <taxon>Homo</taxon>
    </lineage>
</organism>
<comment type="function">
    <text evidence="4">Adhesion molecule that engages in homo- and heterophilic interactions with the other nectin-like family members, leading to cell aggregation. Important for synapse organization, providing regulated trans-synaptic adhesion. Preferentially binds to oligodendrocytes.</text>
</comment>
<comment type="function">
    <molecule>Isoform 5</molecule>
    <text evidence="5">(Microbial infection) Induces cell fusion in neuron infected by a neuropathogenic strain of measles. Interacts with measles hemagglutinin to trigger hyperfusogenic F-mediated membrane fusion and presumably transsynaptic cell-to-cell transmission of the virus.</text>
</comment>
<comment type="subcellular location">
    <subcellularLocation>
        <location evidence="4">Cell membrane</location>
        <topology evidence="4">Single-pass type I membrane protein</topology>
    </subcellularLocation>
    <subcellularLocation>
        <location evidence="4">Synapse</location>
    </subcellularLocation>
    <subcellularLocation>
        <location evidence="4">Cell projection</location>
        <location evidence="4">Axon</location>
    </subcellularLocation>
    <text>Found in the axoplasm of myelinated axons.</text>
</comment>
<comment type="alternative products">
    <event type="alternative splicing"/>
    <isoform>
        <id>Q8N3J6-1</id>
        <name>1</name>
        <sequence type="displayed"/>
    </isoform>
    <isoform>
        <id>Q8N3J6-2</id>
        <name>2</name>
        <sequence type="described" ref="VSP_026334 VSP_026335"/>
    </isoform>
    <isoform>
        <id>Q8N3J6-3</id>
        <name>3</name>
        <sequence type="described" ref="VSP_026333"/>
    </isoform>
    <isoform>
        <id>Q8N3J6-4</id>
        <name>5</name>
        <name>7</name>
        <sequence type="described" ref="VSP_055355 VSP_055356"/>
    </isoform>
    <isoform>
        <id>Q8N3J6-5</id>
        <name>6</name>
        <name>8</name>
        <sequence type="described" ref="VSP_055355"/>
    </isoform>
</comment>
<comment type="similarity">
    <text evidence="10">Belongs to the nectin family.</text>
</comment>
<reference key="1">
    <citation type="journal article" date="2011" name="Biochem. Biophys. Res. Commun.">
        <title>A novel splicing variant of CADM2 as a protective transcript of psoriasis.</title>
        <authorList>
            <person name="Hiruma A."/>
            <person name="Ikeda I."/>
            <person name="Terui T."/>
            <person name="Ozawa M."/>
            <person name="Hashimoto T."/>
            <person name="Yasumoto S."/>
            <person name="Nakayama J."/>
            <person name="Kubota Y."/>
            <person name="Iijima M."/>
            <person name="Sueki H."/>
            <person name="Matsumoto Y."/>
            <person name="Kato M."/>
            <person name="Akasaka E."/>
            <person name="Ikoma N."/>
            <person name="Mabuchi T."/>
            <person name="Tamiya S."/>
            <person name="Matsuyama T."/>
            <person name="Ozawa A."/>
            <person name="Inoko H."/>
            <person name="Oka A."/>
        </authorList>
    </citation>
    <scope>NUCLEOTIDE SEQUENCE [MRNA] (ISOFORMS 5 AND 6)</scope>
    <scope>ALTERNATIVE SPLICING</scope>
</reference>
<reference key="2">
    <citation type="submission" date="2002-08" db="EMBL/GenBank/DDBJ databases">
        <authorList>
            <person name="Gingrich J.R."/>
            <person name="D'Angelo A."/>
            <person name="Chang G.M."/>
            <person name="Greenberg N.M."/>
        </authorList>
    </citation>
    <scope>NUCLEOTIDE SEQUENCE [MRNA] (ISOFORM 3)</scope>
</reference>
<reference key="3">
    <citation type="journal article" date="2007" name="BMC Genomics">
        <title>The full-ORF clone resource of the German cDNA consortium.</title>
        <authorList>
            <person name="Bechtel S."/>
            <person name="Rosenfelder H."/>
            <person name="Duda A."/>
            <person name="Schmidt C.P."/>
            <person name="Ernst U."/>
            <person name="Wellenreuther R."/>
            <person name="Mehrle A."/>
            <person name="Schuster C."/>
            <person name="Bahr A."/>
            <person name="Bloecker H."/>
            <person name="Heubner D."/>
            <person name="Hoerlein A."/>
            <person name="Michel G."/>
            <person name="Wedler H."/>
            <person name="Koehrer K."/>
            <person name="Ottenwaelder B."/>
            <person name="Poustka A."/>
            <person name="Wiemann S."/>
            <person name="Schupp I."/>
        </authorList>
    </citation>
    <scope>NUCLEOTIDE SEQUENCE [LARGE SCALE MRNA] (ISOFORM 1)</scope>
    <scope>NUCLEOTIDE SEQUENCE [LARGE SCALE MRNA] OF 105-435 (ISOFORM 2)</scope>
    <source>
        <tissue>Amygdala</tissue>
        <tissue>Stomach</tissue>
    </source>
</reference>
<reference key="4">
    <citation type="journal article" date="2004" name="Genome Res.">
        <title>The status, quality, and expansion of the NIH full-length cDNA project: the Mammalian Gene Collection (MGC).</title>
        <authorList>
            <consortium name="The MGC Project Team"/>
        </authorList>
    </citation>
    <scope>NUCLEOTIDE SEQUENCE [LARGE SCALE MRNA] (ISOFORM 2)</scope>
    <source>
        <tissue>Brain</tissue>
    </source>
</reference>
<reference key="5">
    <citation type="journal article" date="2007" name="BMC Neurosci.">
        <title>The adhesion molecule Necl-3/SynCAM-2 localizes to myelinated axons, binds to oligodendrocytes and promotes cell adhesion.</title>
        <authorList>
            <person name="Pellissier F."/>
            <person name="Gerber A."/>
            <person name="Bauer C."/>
            <person name="Ballivet M."/>
            <person name="Ossipow V."/>
        </authorList>
    </citation>
    <scope>FUNCTION</scope>
    <scope>SUBCELLULAR LOCATION</scope>
</reference>
<reference key="6">
    <citation type="journal article" date="2023" name="J. Virol.">
        <title>Interaction of the Hemagglutinin Stalk Region with Cell Adhesion Molecule (CADM) 1 and CADM2 Mediates the Spread between Neurons and Neuropathogenicity of Measles Virus with a Hyperfusogenic Fusion Protein.</title>
        <authorList>
            <person name="Takemoto R."/>
            <person name="Hirai Y."/>
            <person name="Watanabe S."/>
            <person name="Harada H."/>
            <person name="Suzuki T."/>
            <person name="Hashiguchi T."/>
            <person name="Yanagi Y."/>
            <person name="Shirogane Y."/>
        </authorList>
    </citation>
    <scope>FUNCTION (MICROBIAL INFECTION)</scope>
</reference>
<gene>
    <name type="primary">CADM2</name>
    <name type="synonym">IGSF4D</name>
    <name type="synonym">NECL3</name>
</gene>
<feature type="signal peptide" evidence="2">
    <location>
        <begin position="1"/>
        <end position="24"/>
    </location>
</feature>
<feature type="chain" id="PRO_0000291970" description="Cell adhesion molecule 2">
    <location>
        <begin position="25"/>
        <end position="435"/>
    </location>
</feature>
<feature type="topological domain" description="Extracellular" evidence="2">
    <location>
        <begin position="25"/>
        <end position="367"/>
    </location>
</feature>
<feature type="transmembrane region" description="Helical" evidence="2">
    <location>
        <begin position="368"/>
        <end position="388"/>
    </location>
</feature>
<feature type="topological domain" description="Cytoplasmic" evidence="2">
    <location>
        <begin position="389"/>
        <end position="435"/>
    </location>
</feature>
<feature type="domain" description="Ig-like V-type">
    <location>
        <begin position="27"/>
        <end position="119"/>
    </location>
</feature>
<feature type="domain" description="Ig-like C2-type 1">
    <location>
        <begin position="127"/>
        <end position="219"/>
    </location>
</feature>
<feature type="domain" description="Ig-like C2-type 2">
    <location>
        <begin position="227"/>
        <end position="312"/>
    </location>
</feature>
<feature type="modified residue" description="Phosphoserine" evidence="1">
    <location>
        <position position="423"/>
    </location>
</feature>
<feature type="glycosylation site" description="N-linked (GlcNAc...) asparagine" evidence="2">
    <location>
        <position position="31"/>
    </location>
</feature>
<feature type="glycosylation site" description="N-linked (GlcNAc...) asparagine" evidence="2">
    <location>
        <position position="51"/>
    </location>
</feature>
<feature type="glycosylation site" description="N-linked (GlcNAc...) asparagine" evidence="2">
    <location>
        <position position="291"/>
    </location>
</feature>
<feature type="disulfide bond" evidence="3">
    <location>
        <begin position="44"/>
        <end position="104"/>
    </location>
</feature>
<feature type="disulfide bond" evidence="3">
    <location>
        <begin position="146"/>
        <end position="203"/>
    </location>
</feature>
<feature type="disulfide bond" evidence="3">
    <location>
        <begin position="248"/>
        <end position="296"/>
    </location>
</feature>
<feature type="splice variant" id="VSP_055355" description="In isoform 5 and isoform 6." evidence="8">
    <location>
        <begin position="1"/>
        <end position="108"/>
    </location>
</feature>
<feature type="splice variant" id="VSP_026333" description="In isoform 3." evidence="9">
    <original>MIWKRSAVLRFYSVCGLLLQ</original>
    <variation>MFVLFLCNLSLVPAAASKNKVK</variation>
    <location>
        <begin position="1"/>
        <end position="20"/>
    </location>
</feature>
<feature type="splice variant" id="VSP_026334" description="In isoform 2." evidence="6 7">
    <original>Q</original>
    <variation>QAAASKNKVK</variation>
    <location>
        <position position="20"/>
    </location>
</feature>
<feature type="splice variant" id="VSP_055356" description="In isoform 5." evidence="8">
    <location>
        <begin position="315"/>
        <end position="354"/>
    </location>
</feature>
<feature type="splice variant" id="VSP_026335" description="In isoform 2." evidence="6 7">
    <location>
        <begin position="316"/>
        <end position="355"/>
    </location>
</feature>
<feature type="sequence conflict" description="In Ref. 2; AAN16368." evidence="10" ref="2">
    <original>E</original>
    <variation>K</variation>
    <location>
        <position position="174"/>
    </location>
</feature>
<feature type="sequence conflict" description="In Ref. 2; AAN16368." evidence="10" ref="2">
    <original>A</original>
    <variation>T</variation>
    <location>
        <position position="212"/>
    </location>
</feature>
<name>CADM2_HUMAN</name>
<proteinExistence type="evidence at protein level"/>